<organism>
    <name type="scientific">Limosilactobacillus reuteri (strain DSM 20016)</name>
    <name type="common">Lactobacillus reuteri</name>
    <dbReference type="NCBI Taxonomy" id="557436"/>
    <lineage>
        <taxon>Bacteria</taxon>
        <taxon>Bacillati</taxon>
        <taxon>Bacillota</taxon>
        <taxon>Bacilli</taxon>
        <taxon>Lactobacillales</taxon>
        <taxon>Lactobacillaceae</taxon>
        <taxon>Limosilactobacillus</taxon>
    </lineage>
</organism>
<evidence type="ECO:0000255" key="1">
    <source>
        <dbReference type="HAMAP-Rule" id="MF_02011"/>
    </source>
</evidence>
<evidence type="ECO:0000256" key="2">
    <source>
        <dbReference type="SAM" id="MobiDB-lite"/>
    </source>
</evidence>
<name>GPSB_LIMRD</name>
<protein>
    <recommendedName>
        <fullName evidence="1">Cell cycle protein GpsB</fullName>
    </recommendedName>
    <alternativeName>
        <fullName evidence="1">Guiding PBP1-shuttling protein</fullName>
    </alternativeName>
</protein>
<sequence>MDNIKFTPQDILHKQFKERNIGKGYDEADVDAFLDDVIKDYDTYNKELERLNDENERLRAKVDELNRQVEVGSSMSNQTASRQPVSSATNMDILKRLSNLERRVFGSQLDGNDNNDSHLL</sequence>
<reference key="1">
    <citation type="journal article" date="2011" name="PLoS Genet.">
        <title>The evolution of host specialization in the vertebrate gut symbiont Lactobacillus reuteri.</title>
        <authorList>
            <person name="Frese S.A."/>
            <person name="Benson A.K."/>
            <person name="Tannock G.W."/>
            <person name="Loach D.M."/>
            <person name="Kim J."/>
            <person name="Zhang M."/>
            <person name="Oh P.L."/>
            <person name="Heng N.C."/>
            <person name="Patil P.B."/>
            <person name="Juge N."/>
            <person name="Mackenzie D.A."/>
            <person name="Pearson B.M."/>
            <person name="Lapidus A."/>
            <person name="Dalin E."/>
            <person name="Tice H."/>
            <person name="Goltsman E."/>
            <person name="Land M."/>
            <person name="Hauser L."/>
            <person name="Ivanova N."/>
            <person name="Kyrpides N.C."/>
            <person name="Walter J."/>
        </authorList>
    </citation>
    <scope>NUCLEOTIDE SEQUENCE [LARGE SCALE GENOMIC DNA]</scope>
    <source>
        <strain>DSM 20016</strain>
    </source>
</reference>
<gene>
    <name evidence="1" type="primary">gpsB</name>
    <name type="ordered locus">Lreu_0923</name>
</gene>
<comment type="function">
    <text evidence="1">Divisome component that associates with the complex late in its assembly, after the Z-ring is formed, and is dependent on DivIC and PBP2B for its recruitment to the divisome. Together with EzrA, is a key component of the system that regulates PBP1 localization during cell cycle progression. Its main role could be the removal of PBP1 from the cell pole after pole maturation is completed. Also contributes to the recruitment of PBP1 to the division complex. Not essential for septum formation.</text>
</comment>
<comment type="subunit">
    <text evidence="1">Forms polymers through the coiled coil domains. Interacts with PBP1, MreC and EzrA.</text>
</comment>
<comment type="subcellular location">
    <subcellularLocation>
        <location evidence="1">Cytoplasm</location>
    </subcellularLocation>
    <text evidence="1">Shuttles between the lateral wall and the division site in a cell cycle-dependent manner.</text>
</comment>
<comment type="similarity">
    <text evidence="1">Belongs to the GpsB family.</text>
</comment>
<accession>A5VK11</accession>
<feature type="chain" id="PRO_0000337922" description="Cell cycle protein GpsB">
    <location>
        <begin position="1"/>
        <end position="120"/>
    </location>
</feature>
<feature type="region of interest" description="Disordered" evidence="2">
    <location>
        <begin position="69"/>
        <end position="90"/>
    </location>
</feature>
<feature type="coiled-coil region" evidence="1">
    <location>
        <begin position="34"/>
        <end position="74"/>
    </location>
</feature>
<feature type="compositionally biased region" description="Polar residues" evidence="2">
    <location>
        <begin position="71"/>
        <end position="90"/>
    </location>
</feature>
<keyword id="KW-0131">Cell cycle</keyword>
<keyword id="KW-0132">Cell division</keyword>
<keyword id="KW-0133">Cell shape</keyword>
<keyword id="KW-0175">Coiled coil</keyword>
<keyword id="KW-0963">Cytoplasm</keyword>
<keyword id="KW-1185">Reference proteome</keyword>
<dbReference type="EMBL" id="CP000705">
    <property type="protein sequence ID" value="ABQ83185.1"/>
    <property type="molecule type" value="Genomic_DNA"/>
</dbReference>
<dbReference type="SMR" id="A5VK11"/>
<dbReference type="STRING" id="557436.Lreu_0923"/>
<dbReference type="KEGG" id="lre:Lreu_0923"/>
<dbReference type="eggNOG" id="COG3599">
    <property type="taxonomic scope" value="Bacteria"/>
</dbReference>
<dbReference type="HOGENOM" id="CLU_140309_1_0_9"/>
<dbReference type="Proteomes" id="UP000001991">
    <property type="component" value="Chromosome"/>
</dbReference>
<dbReference type="GO" id="GO:0005737">
    <property type="term" value="C:cytoplasm"/>
    <property type="evidence" value="ECO:0007669"/>
    <property type="project" value="UniProtKB-SubCell"/>
</dbReference>
<dbReference type="GO" id="GO:0051301">
    <property type="term" value="P:cell division"/>
    <property type="evidence" value="ECO:0007669"/>
    <property type="project" value="UniProtKB-UniRule"/>
</dbReference>
<dbReference type="GO" id="GO:0008360">
    <property type="term" value="P:regulation of cell shape"/>
    <property type="evidence" value="ECO:0007669"/>
    <property type="project" value="UniProtKB-UniRule"/>
</dbReference>
<dbReference type="Gene3D" id="6.10.250.660">
    <property type="match status" value="1"/>
</dbReference>
<dbReference type="HAMAP" id="MF_02011">
    <property type="entry name" value="GpsB"/>
    <property type="match status" value="1"/>
</dbReference>
<dbReference type="InterPro" id="IPR011229">
    <property type="entry name" value="Cell_cycle_GpsB"/>
</dbReference>
<dbReference type="InterPro" id="IPR019933">
    <property type="entry name" value="DivIVA_domain"/>
</dbReference>
<dbReference type="InterPro" id="IPR007793">
    <property type="entry name" value="DivIVA_fam"/>
</dbReference>
<dbReference type="NCBIfam" id="TIGR03544">
    <property type="entry name" value="DivI1A_domain"/>
    <property type="match status" value="1"/>
</dbReference>
<dbReference type="NCBIfam" id="NF010725">
    <property type="entry name" value="PRK14127.1"/>
    <property type="match status" value="1"/>
</dbReference>
<dbReference type="PANTHER" id="PTHR35794:SF1">
    <property type="entry name" value="CELL CYCLE PROTEIN GPSB"/>
    <property type="match status" value="1"/>
</dbReference>
<dbReference type="PANTHER" id="PTHR35794">
    <property type="entry name" value="CELL DIVISION PROTEIN DIVIVA"/>
    <property type="match status" value="1"/>
</dbReference>
<dbReference type="Pfam" id="PF05103">
    <property type="entry name" value="DivIVA"/>
    <property type="match status" value="1"/>
</dbReference>
<dbReference type="PIRSF" id="PIRSF029938">
    <property type="entry name" value="UCP029938"/>
    <property type="match status" value="1"/>
</dbReference>
<proteinExistence type="inferred from homology"/>